<dbReference type="EMBL" id="DS480455">
    <property type="protein sequence ID" value="EDO15566.1"/>
    <property type="molecule type" value="Genomic_DNA"/>
</dbReference>
<dbReference type="RefSeq" id="XP_001643424.1">
    <property type="nucleotide sequence ID" value="XM_001643374.1"/>
</dbReference>
<dbReference type="FunCoup" id="A7TQB2">
    <property type="interactions" value="122"/>
</dbReference>
<dbReference type="STRING" id="436907.A7TQB2"/>
<dbReference type="GeneID" id="5543631"/>
<dbReference type="KEGG" id="vpo:Kpol_1042p27"/>
<dbReference type="eggNOG" id="ENOG502QQMN">
    <property type="taxonomic scope" value="Eukaryota"/>
</dbReference>
<dbReference type="HOGENOM" id="CLU_060779_0_0_1"/>
<dbReference type="InParanoid" id="A7TQB2"/>
<dbReference type="OMA" id="HKFWFAC"/>
<dbReference type="OrthoDB" id="5582146at2759"/>
<dbReference type="PhylomeDB" id="A7TQB2"/>
<dbReference type="Proteomes" id="UP000000267">
    <property type="component" value="Unassembled WGS sequence"/>
</dbReference>
<name>MTC2_VANPO</name>
<sequence>MKYNEELMDFEMALRFSVVTNKSFICFVNKEIEVTPQVVVKQAVERILSDLDGLEIEVLDSFLDTKCNNKTKSEDCKIKITIVPNLNNLTAEKQNVLSKYLRDNSNDIQGPRVKRNPKFQTTDLTNDKTEKNNTKYIVIGIVLYENKNEDENEDEEERLDKKSNVLTINDWLRNKFWLGCMAPVDESIEIVESIIYSMKDLEKYDTVVIKPVIKRYIEDIIVHLRMHNITYKPKGGGIQPDALHDIVALSQLISIMSSKYNKQLWFVTPDYIKIASMFYFPSHLRIVSDSSMDVSVAYGSKSHLVDEFLEKLNKVKFLARSQNPLFIESLVVKDVLTKIIPAI</sequence>
<keyword id="KW-1185">Reference proteome</keyword>
<gene>
    <name type="primary">MTC2</name>
    <name type="ORF">Kpol_1042p27</name>
</gene>
<proteinExistence type="inferred from homology"/>
<comment type="function">
    <text evidence="1">May be involved in telomere capping.</text>
</comment>
<comment type="similarity">
    <text evidence="2">Belongs to the MTC2 family.</text>
</comment>
<evidence type="ECO:0000250" key="1"/>
<evidence type="ECO:0000305" key="2"/>
<accession>A7TQB2</accession>
<organism>
    <name type="scientific">Vanderwaltozyma polyspora (strain ATCC 22028 / DSM 70294 / BCRC 21397 / CBS 2163 / NBRC 10782 / NRRL Y-8283 / UCD 57-17)</name>
    <name type="common">Kluyveromyces polysporus</name>
    <dbReference type="NCBI Taxonomy" id="436907"/>
    <lineage>
        <taxon>Eukaryota</taxon>
        <taxon>Fungi</taxon>
        <taxon>Dikarya</taxon>
        <taxon>Ascomycota</taxon>
        <taxon>Saccharomycotina</taxon>
        <taxon>Saccharomycetes</taxon>
        <taxon>Saccharomycetales</taxon>
        <taxon>Saccharomycetaceae</taxon>
        <taxon>Vanderwaltozyma</taxon>
    </lineage>
</organism>
<reference key="1">
    <citation type="journal article" date="2007" name="Proc. Natl. Acad. Sci. U.S.A.">
        <title>Independent sorting-out of thousands of duplicated gene pairs in two yeast species descended from a whole-genome duplication.</title>
        <authorList>
            <person name="Scannell D.R."/>
            <person name="Frank A.C."/>
            <person name="Conant G.C."/>
            <person name="Byrne K.P."/>
            <person name="Woolfit M."/>
            <person name="Wolfe K.H."/>
        </authorList>
    </citation>
    <scope>NUCLEOTIDE SEQUENCE [LARGE SCALE GENOMIC DNA]</scope>
    <source>
        <strain>ATCC 22028 / DSM 70294 / BCRC 21397 / CBS 2163 / NBRC 10782 / NRRL Y-8283 / UCD 57-17</strain>
    </source>
</reference>
<feature type="chain" id="PRO_0000407764" description="Maintenance of telomere capping protein 2">
    <location>
        <begin position="1"/>
        <end position="343"/>
    </location>
</feature>
<protein>
    <recommendedName>
        <fullName>Maintenance of telomere capping protein 2</fullName>
    </recommendedName>
</protein>